<comment type="function">
    <text evidence="1">Serine/threonine-protein kinase that plays a central role in centriole duplication. Able to trigger procentriole formation on the surface of the mother centriole cylinder, using mother centriole as a platform, leading to the recruitment of centriole biogenesis proteins such as sas-6. When overexpressed, it is able to induce centrosome amplification through the simultaneous generation of multiple procentrioles adjoining each parental centriole during S phase. Centrosome amplification following overexpression can initiate tumorigenesis, highlighting the importance of centrosome regulation in cancers (By similarity).</text>
</comment>
<comment type="catalytic activity">
    <reaction>
        <text>L-seryl-[protein] + ATP = O-phospho-L-seryl-[protein] + ADP + H(+)</text>
        <dbReference type="Rhea" id="RHEA:17989"/>
        <dbReference type="Rhea" id="RHEA-COMP:9863"/>
        <dbReference type="Rhea" id="RHEA-COMP:11604"/>
        <dbReference type="ChEBI" id="CHEBI:15378"/>
        <dbReference type="ChEBI" id="CHEBI:29999"/>
        <dbReference type="ChEBI" id="CHEBI:30616"/>
        <dbReference type="ChEBI" id="CHEBI:83421"/>
        <dbReference type="ChEBI" id="CHEBI:456216"/>
        <dbReference type="EC" id="2.7.11.21"/>
    </reaction>
</comment>
<comment type="catalytic activity">
    <reaction>
        <text>L-threonyl-[protein] + ATP = O-phospho-L-threonyl-[protein] + ADP + H(+)</text>
        <dbReference type="Rhea" id="RHEA:46608"/>
        <dbReference type="Rhea" id="RHEA-COMP:11060"/>
        <dbReference type="Rhea" id="RHEA-COMP:11605"/>
        <dbReference type="ChEBI" id="CHEBI:15378"/>
        <dbReference type="ChEBI" id="CHEBI:30013"/>
        <dbReference type="ChEBI" id="CHEBI:30616"/>
        <dbReference type="ChEBI" id="CHEBI:61977"/>
        <dbReference type="ChEBI" id="CHEBI:456216"/>
        <dbReference type="EC" id="2.7.11.21"/>
    </reaction>
</comment>
<comment type="subunit">
    <text evidence="1">Homodimer.</text>
</comment>
<comment type="subcellular location">
    <subcellularLocation>
        <location evidence="1">Cytoplasm</location>
        <location evidence="1">Cytoskeleton</location>
        <location evidence="1">Microtubule organizing center</location>
        <location evidence="1">Centrosome</location>
        <location evidence="1">Centriole</location>
    </subcellularLocation>
</comment>
<comment type="PTM">
    <text evidence="1">Ubiquitinated by the SCF(Slimb) ubiquitin ligase complex; leading to its degradation by the proteasome during interphase and regulating centriole number and ensuring the block to centriole reduplication.</text>
</comment>
<comment type="similarity">
    <text evidence="3 4 5">Belongs to the protein kinase superfamily. Ser/Thr protein kinase family. CDC5/Polo subfamily.</text>
</comment>
<proteinExistence type="inferred from homology"/>
<evidence type="ECO:0000250" key="1"/>
<evidence type="ECO:0000255" key="2">
    <source>
        <dbReference type="PROSITE-ProRule" id="PRU00154"/>
    </source>
</evidence>
<evidence type="ECO:0000255" key="3">
    <source>
        <dbReference type="PROSITE-ProRule" id="PRU00159"/>
    </source>
</evidence>
<evidence type="ECO:0000255" key="4">
    <source>
        <dbReference type="PROSITE-ProRule" id="PRU01328"/>
    </source>
</evidence>
<evidence type="ECO:0000255" key="5">
    <source>
        <dbReference type="PROSITE-ProRule" id="PRU01329"/>
    </source>
</evidence>
<evidence type="ECO:0000256" key="6">
    <source>
        <dbReference type="SAM" id="MobiDB-lite"/>
    </source>
</evidence>
<name>PLK4_DROPE</name>
<keyword id="KW-0067">ATP-binding</keyword>
<keyword id="KW-0963">Cytoplasm</keyword>
<keyword id="KW-0206">Cytoskeleton</keyword>
<keyword id="KW-0418">Kinase</keyword>
<keyword id="KW-0547">Nucleotide-binding</keyword>
<keyword id="KW-1185">Reference proteome</keyword>
<keyword id="KW-0723">Serine/threonine-protein kinase</keyword>
<keyword id="KW-0808">Transferase</keyword>
<keyword id="KW-0832">Ubl conjugation</keyword>
<reference key="1">
    <citation type="journal article" date="2007" name="Nature">
        <title>Evolution of genes and genomes on the Drosophila phylogeny.</title>
        <authorList>
            <consortium name="Drosophila 12 genomes consortium"/>
        </authorList>
    </citation>
    <scope>NUCLEOTIDE SEQUENCE [LARGE SCALE GENOMIC DNA]</scope>
    <source>
        <strain>MSH-3 / Tucson 14011-0111.49</strain>
    </source>
</reference>
<sequence length="777" mass="87311">MMSTRTFGETIEEYEVQHLLGKGGFASVYKARCLHSHQDVAIKMIDKKLIQGTGLTSRVRQEVEIHSRLKHPSVLQLYTFFQDVNYVYLVLELAHNGELQRYMKQHLLRPFTESEGATILRQVVAGLLYLHSHNIMHRDISLSNLLLSKEMHIKIADFGLATQLKRPDERHMTMCGTPNYISPEVVSRLSHGLPADVWSVGCMLYTLLVGRPPFETEGVESTLNKVVMSEFMMPSHLSFEAQDLIHKLLKKSPHERITLEQVLRHPFLKRTVGGSSYSTTPGALNEFSQSLASSDSGIVTFASSDSRKSHRLRSVDNSSGQSMPQIMEEYLPSSNLGYDSKEHRPIYEQHGSYLPTPGDQLENRDAKWPGTNNLAPFTSDSDMIPSPVGEKRLLMPPLETKRLQPTRYKTKNAIMSILRTGEVVLEFVKFKVKYNEDRITDICRISEDGRRIIIYQPDPGRGLPIREHPPDPLIPSENCVYNYENLPNKHWKKYVYAARFVGLVKSKTPKITFFSSLGKCQLMETMTDFEVRFYSGAKLLKSSTDGVKVFNSNGAVLSDNGCAEARNLIDHGNECFSHCVNISNALELAQTKENTCFPVTIGRRPAADMHAGQRFDGLRDTTNFAYSTPKSNQGSINFSVSTISTTRSASDYNSNTPRLNMLAAHQNVPIKRITVPEIGIVTELSHGVVQVQFYDGSMVSVIPKVQGGGITYTQANGLSTHFGNNDDLPFAVRDRINQMPQLQMKLKCAPLLGNARSVDCHLMTPKTTTPFYNRMII</sequence>
<organism>
    <name type="scientific">Drosophila persimilis</name>
    <name type="common">Fruit fly</name>
    <dbReference type="NCBI Taxonomy" id="7234"/>
    <lineage>
        <taxon>Eukaryota</taxon>
        <taxon>Metazoa</taxon>
        <taxon>Ecdysozoa</taxon>
        <taxon>Arthropoda</taxon>
        <taxon>Hexapoda</taxon>
        <taxon>Insecta</taxon>
        <taxon>Pterygota</taxon>
        <taxon>Neoptera</taxon>
        <taxon>Endopterygota</taxon>
        <taxon>Diptera</taxon>
        <taxon>Brachycera</taxon>
        <taxon>Muscomorpha</taxon>
        <taxon>Ephydroidea</taxon>
        <taxon>Drosophilidae</taxon>
        <taxon>Drosophila</taxon>
        <taxon>Sophophora</taxon>
    </lineage>
</organism>
<accession>B4HBU3</accession>
<feature type="chain" id="PRO_0000385293" description="Serine/threonine-protein kinase PLK4">
    <location>
        <begin position="1"/>
        <end position="777"/>
    </location>
</feature>
<feature type="domain" description="Protein kinase" evidence="3">
    <location>
        <begin position="14"/>
        <end position="268"/>
    </location>
</feature>
<feature type="domain" description="Cryptic POLO box 1 (CPB1)" evidence="4">
    <location>
        <begin position="390"/>
        <end position="507"/>
    </location>
</feature>
<feature type="domain" description="Cryptic POLO box 2 (CPB2)" evidence="5">
    <location>
        <begin position="508"/>
        <end position="611"/>
    </location>
</feature>
<feature type="domain" description="POLO box" evidence="2">
    <location>
        <begin position="669"/>
        <end position="748"/>
    </location>
</feature>
<feature type="region of interest" description="Disordered" evidence="6">
    <location>
        <begin position="371"/>
        <end position="390"/>
    </location>
</feature>
<feature type="compositionally biased region" description="Polar residues" evidence="6">
    <location>
        <begin position="371"/>
        <end position="381"/>
    </location>
</feature>
<feature type="active site" description="Proton acceptor" evidence="3">
    <location>
        <position position="139"/>
    </location>
</feature>
<feature type="binding site" evidence="3">
    <location>
        <begin position="20"/>
        <end position="28"/>
    </location>
    <ligand>
        <name>ATP</name>
        <dbReference type="ChEBI" id="CHEBI:30616"/>
    </ligand>
</feature>
<feature type="binding site" evidence="3">
    <location>
        <position position="43"/>
    </location>
    <ligand>
        <name>ATP</name>
        <dbReference type="ChEBI" id="CHEBI:30616"/>
    </ligand>
</feature>
<gene>
    <name type="primary">SAK</name>
    <name type="ORF">GL11903</name>
</gene>
<protein>
    <recommendedName>
        <fullName>Serine/threonine-protein kinase PLK4</fullName>
        <ecNumber>2.7.11.21</ecNumber>
    </recommendedName>
    <alternativeName>
        <fullName>Polo-like kinase 4</fullName>
        <shortName>PLK-4</shortName>
    </alternativeName>
    <alternativeName>
        <fullName>Serine/threonine-protein kinase SAK</fullName>
    </alternativeName>
</protein>
<dbReference type="EC" id="2.7.11.21"/>
<dbReference type="EMBL" id="CH479267">
    <property type="protein sequence ID" value="EDW39537.1"/>
    <property type="molecule type" value="Genomic_DNA"/>
</dbReference>
<dbReference type="SMR" id="B4HBU3"/>
<dbReference type="STRING" id="7234.B4HBU3"/>
<dbReference type="EnsemblMetazoa" id="FBtr0177518">
    <property type="protein sequence ID" value="FBpp0176010"/>
    <property type="gene ID" value="FBgn0149511"/>
</dbReference>
<dbReference type="EnsemblMetazoa" id="XM_002028286.2">
    <property type="protein sequence ID" value="XP_002028322.1"/>
    <property type="gene ID" value="LOC6603338"/>
</dbReference>
<dbReference type="GeneID" id="6603338"/>
<dbReference type="KEGG" id="dpe:6603338"/>
<dbReference type="eggNOG" id="KOG0575">
    <property type="taxonomic scope" value="Eukaryota"/>
</dbReference>
<dbReference type="HOGENOM" id="CLU_008726_2_0_1"/>
<dbReference type="OMA" id="LPSKHWK"/>
<dbReference type="OrthoDB" id="10004143at2759"/>
<dbReference type="PhylomeDB" id="B4HBU3"/>
<dbReference type="ChiTaRS" id="SAK">
    <property type="organism name" value="fly"/>
</dbReference>
<dbReference type="Proteomes" id="UP000008744">
    <property type="component" value="Unassembled WGS sequence"/>
</dbReference>
<dbReference type="GO" id="GO:0005814">
    <property type="term" value="C:centriole"/>
    <property type="evidence" value="ECO:0007669"/>
    <property type="project" value="UniProtKB-SubCell"/>
</dbReference>
<dbReference type="GO" id="GO:0005737">
    <property type="term" value="C:cytoplasm"/>
    <property type="evidence" value="ECO:0007669"/>
    <property type="project" value="UniProtKB-KW"/>
</dbReference>
<dbReference type="GO" id="GO:0005634">
    <property type="term" value="C:nucleus"/>
    <property type="evidence" value="ECO:0007669"/>
    <property type="project" value="TreeGrafter"/>
</dbReference>
<dbReference type="GO" id="GO:0005524">
    <property type="term" value="F:ATP binding"/>
    <property type="evidence" value="ECO:0007669"/>
    <property type="project" value="UniProtKB-KW"/>
</dbReference>
<dbReference type="GO" id="GO:0042802">
    <property type="term" value="F:identical protein binding"/>
    <property type="evidence" value="ECO:0007669"/>
    <property type="project" value="EnsemblMetazoa"/>
</dbReference>
<dbReference type="GO" id="GO:0106310">
    <property type="term" value="F:protein serine kinase activity"/>
    <property type="evidence" value="ECO:0007669"/>
    <property type="project" value="RHEA"/>
</dbReference>
<dbReference type="GO" id="GO:0004674">
    <property type="term" value="F:protein serine/threonine kinase activity"/>
    <property type="evidence" value="ECO:0007669"/>
    <property type="project" value="UniProtKB-KW"/>
</dbReference>
<dbReference type="GO" id="GO:0007099">
    <property type="term" value="P:centriole replication"/>
    <property type="evidence" value="ECO:0007669"/>
    <property type="project" value="EnsemblMetazoa"/>
</dbReference>
<dbReference type="GO" id="GO:0007140">
    <property type="term" value="P:male meiotic nuclear division"/>
    <property type="evidence" value="ECO:0007669"/>
    <property type="project" value="EnsemblMetazoa"/>
</dbReference>
<dbReference type="GO" id="GO:0045732">
    <property type="term" value="P:positive regulation of protein catabolic process"/>
    <property type="evidence" value="ECO:0007669"/>
    <property type="project" value="EnsemblMetazoa"/>
</dbReference>
<dbReference type="GO" id="GO:0046599">
    <property type="term" value="P:regulation of centriole replication"/>
    <property type="evidence" value="ECO:0007669"/>
    <property type="project" value="EnsemblMetazoa"/>
</dbReference>
<dbReference type="GO" id="GO:0031647">
    <property type="term" value="P:regulation of protein stability"/>
    <property type="evidence" value="ECO:0007669"/>
    <property type="project" value="EnsemblMetazoa"/>
</dbReference>
<dbReference type="GO" id="GO:0007288">
    <property type="term" value="P:sperm axoneme assembly"/>
    <property type="evidence" value="ECO:0007669"/>
    <property type="project" value="EnsemblMetazoa"/>
</dbReference>
<dbReference type="GO" id="GO:0035186">
    <property type="term" value="P:syncytial blastoderm mitotic cell cycle"/>
    <property type="evidence" value="ECO:0007669"/>
    <property type="project" value="EnsemblMetazoa"/>
</dbReference>
<dbReference type="CDD" id="cd13114">
    <property type="entry name" value="POLO_box_Plk4_1"/>
    <property type="match status" value="1"/>
</dbReference>
<dbReference type="CDD" id="cd13116">
    <property type="entry name" value="POLO_box_Plk4_3"/>
    <property type="match status" value="1"/>
</dbReference>
<dbReference type="FunFam" id="3.30.200.20:FF:000042">
    <property type="entry name" value="Aurora kinase A"/>
    <property type="match status" value="1"/>
</dbReference>
<dbReference type="FunFam" id="1.10.510.10:FF:000576">
    <property type="entry name" value="Serine/threonine-protein kinase PLK4"/>
    <property type="match status" value="1"/>
</dbReference>
<dbReference type="FunFam" id="3.30.1120.130:FF:000002">
    <property type="entry name" value="Serine/threonine-protein kinase PLK4"/>
    <property type="match status" value="1"/>
</dbReference>
<dbReference type="FunFam" id="3.30.1120.120:FF:000001">
    <property type="entry name" value="serine/threonine-protein kinase PLK4 isoform X2"/>
    <property type="match status" value="1"/>
</dbReference>
<dbReference type="Gene3D" id="2.40.50.930">
    <property type="match status" value="1"/>
</dbReference>
<dbReference type="Gene3D" id="3.30.1120.120">
    <property type="match status" value="1"/>
</dbReference>
<dbReference type="Gene3D" id="3.30.1120.130">
    <property type="match status" value="1"/>
</dbReference>
<dbReference type="Gene3D" id="1.10.510.10">
    <property type="entry name" value="Transferase(Phosphotransferase) domain 1"/>
    <property type="match status" value="1"/>
</dbReference>
<dbReference type="InterPro" id="IPR011009">
    <property type="entry name" value="Kinase-like_dom_sf"/>
</dbReference>
<dbReference type="InterPro" id="IPR047108">
    <property type="entry name" value="Plk4-like_POLO_box_2_sf"/>
</dbReference>
<dbReference type="InterPro" id="IPR000959">
    <property type="entry name" value="POLO_box_dom"/>
</dbReference>
<dbReference type="InterPro" id="IPR033699">
    <property type="entry name" value="POLO_box_Plk4_1"/>
</dbReference>
<dbReference type="InterPro" id="IPR033698">
    <property type="entry name" value="POLO_box_Plk4_2"/>
</dbReference>
<dbReference type="InterPro" id="IPR033696">
    <property type="entry name" value="POLO_box_Plk4_C"/>
</dbReference>
<dbReference type="InterPro" id="IPR000719">
    <property type="entry name" value="Prot_kinase_dom"/>
</dbReference>
<dbReference type="InterPro" id="IPR017441">
    <property type="entry name" value="Protein_kinase_ATP_BS"/>
</dbReference>
<dbReference type="InterPro" id="IPR046437">
    <property type="entry name" value="Ser_Thr-PK_POLO_box_1_sf"/>
</dbReference>
<dbReference type="InterPro" id="IPR008266">
    <property type="entry name" value="Tyr_kinase_AS"/>
</dbReference>
<dbReference type="PANTHER" id="PTHR24345">
    <property type="entry name" value="SERINE/THREONINE-PROTEIN KINASE PLK"/>
    <property type="match status" value="1"/>
</dbReference>
<dbReference type="PANTHER" id="PTHR24345:SF91">
    <property type="entry name" value="SERINE_THREONINE-PROTEIN KINASE PLK4"/>
    <property type="match status" value="1"/>
</dbReference>
<dbReference type="Pfam" id="PF00069">
    <property type="entry name" value="Pkinase"/>
    <property type="match status" value="1"/>
</dbReference>
<dbReference type="Pfam" id="PF18190">
    <property type="entry name" value="Plk4_PB1"/>
    <property type="match status" value="1"/>
</dbReference>
<dbReference type="Pfam" id="PF18409">
    <property type="entry name" value="Plk4_PB2"/>
    <property type="match status" value="1"/>
</dbReference>
<dbReference type="SUPFAM" id="SSF82615">
    <property type="entry name" value="Polo-box domain"/>
    <property type="match status" value="1"/>
</dbReference>
<dbReference type="SUPFAM" id="SSF56112">
    <property type="entry name" value="Protein kinase-like (PK-like)"/>
    <property type="match status" value="1"/>
</dbReference>
<dbReference type="PROSITE" id="PS51984">
    <property type="entry name" value="CPB1"/>
    <property type="match status" value="1"/>
</dbReference>
<dbReference type="PROSITE" id="PS51985">
    <property type="entry name" value="CPB2"/>
    <property type="match status" value="1"/>
</dbReference>
<dbReference type="PROSITE" id="PS50078">
    <property type="entry name" value="POLO_BOX"/>
    <property type="match status" value="1"/>
</dbReference>
<dbReference type="PROSITE" id="PS00107">
    <property type="entry name" value="PROTEIN_KINASE_ATP"/>
    <property type="match status" value="1"/>
</dbReference>
<dbReference type="PROSITE" id="PS50011">
    <property type="entry name" value="PROTEIN_KINASE_DOM"/>
    <property type="match status" value="1"/>
</dbReference>